<organism>
    <name type="scientific">Chromobacterium violaceum (strain ATCC 12472 / DSM 30191 / JCM 1249 / CCUG 213 / NBRC 12614 / NCIMB 9131 / NCTC 9757 / MK)</name>
    <dbReference type="NCBI Taxonomy" id="243365"/>
    <lineage>
        <taxon>Bacteria</taxon>
        <taxon>Pseudomonadati</taxon>
        <taxon>Pseudomonadota</taxon>
        <taxon>Betaproteobacteria</taxon>
        <taxon>Neisseriales</taxon>
        <taxon>Chromobacteriaceae</taxon>
        <taxon>Chromobacterium</taxon>
    </lineage>
</organism>
<protein>
    <recommendedName>
        <fullName evidence="1">Formimidoylglutamase</fullName>
        <ecNumber evidence="1">3.5.3.8</ecNumber>
    </recommendedName>
    <alternativeName>
        <fullName evidence="1">Formiminoglutamase</fullName>
    </alternativeName>
    <alternativeName>
        <fullName evidence="1">Formiminoglutamate hydrolase</fullName>
    </alternativeName>
</protein>
<sequence>MVDMKIWTGRVDAAEGEAAKRWHQAVQAMPENGAPGIAIIGFACDEGVRRNQGRVGAAGGPKTLRKALANLAYHPTLPLYDAGDVACADGDLAAAQQRLGERVAQVIAAGHLPLVLGGGHETAYGHWLGLSAAHPDKRIGVINFDAHFDLRQASEATSGTPFAQIAADCARHGRVFRYLCLGVAETANTQALFDTARRLGAEWRLDTDMNGWQLADIRGQLAEFLDSVDAVYLTIDLDVLPAAQMPAVSAPAGYGVDIAVVEALAGRIAKSGKLAGADLVEFNPDYDIDSHGAKAAARLAWSLSRHLRR</sequence>
<feature type="chain" id="PRO_0000173751" description="Formimidoylglutamase">
    <location>
        <begin position="1"/>
        <end position="309"/>
    </location>
</feature>
<feature type="binding site" evidence="1">
    <location>
        <position position="120"/>
    </location>
    <ligand>
        <name>Mn(2+)</name>
        <dbReference type="ChEBI" id="CHEBI:29035"/>
        <label>1</label>
    </ligand>
</feature>
<feature type="binding site" evidence="1">
    <location>
        <position position="145"/>
    </location>
    <ligand>
        <name>Mn(2+)</name>
        <dbReference type="ChEBI" id="CHEBI:29035"/>
        <label>1</label>
    </ligand>
</feature>
<feature type="binding site" evidence="1">
    <location>
        <position position="145"/>
    </location>
    <ligand>
        <name>Mn(2+)</name>
        <dbReference type="ChEBI" id="CHEBI:29035"/>
        <label>2</label>
    </ligand>
</feature>
<feature type="binding site" evidence="1">
    <location>
        <position position="147"/>
    </location>
    <ligand>
        <name>Mn(2+)</name>
        <dbReference type="ChEBI" id="CHEBI:29035"/>
        <label>2</label>
    </ligand>
</feature>
<feature type="binding site" evidence="1">
    <location>
        <position position="149"/>
    </location>
    <ligand>
        <name>Mn(2+)</name>
        <dbReference type="ChEBI" id="CHEBI:29035"/>
        <label>1</label>
    </ligand>
</feature>
<feature type="binding site" evidence="1">
    <location>
        <position position="236"/>
    </location>
    <ligand>
        <name>Mn(2+)</name>
        <dbReference type="ChEBI" id="CHEBI:29035"/>
        <label>1</label>
    </ligand>
</feature>
<feature type="binding site" evidence="1">
    <location>
        <position position="236"/>
    </location>
    <ligand>
        <name>Mn(2+)</name>
        <dbReference type="ChEBI" id="CHEBI:29035"/>
        <label>2</label>
    </ligand>
</feature>
<feature type="binding site" evidence="1">
    <location>
        <position position="238"/>
    </location>
    <ligand>
        <name>Mn(2+)</name>
        <dbReference type="ChEBI" id="CHEBI:29035"/>
        <label>2</label>
    </ligand>
</feature>
<proteinExistence type="inferred from homology"/>
<evidence type="ECO:0000255" key="1">
    <source>
        <dbReference type="HAMAP-Rule" id="MF_00737"/>
    </source>
</evidence>
<dbReference type="EC" id="3.5.3.8" evidence="1"/>
<dbReference type="EMBL" id="AE016825">
    <property type="protein sequence ID" value="AAQ58001.1"/>
    <property type="molecule type" value="Genomic_DNA"/>
</dbReference>
<dbReference type="RefSeq" id="WP_011133877.1">
    <property type="nucleotide sequence ID" value="NC_005085.1"/>
</dbReference>
<dbReference type="SMR" id="P60109"/>
<dbReference type="STRING" id="243365.CV_0322"/>
<dbReference type="KEGG" id="cvi:CV_0322"/>
<dbReference type="eggNOG" id="COG0010">
    <property type="taxonomic scope" value="Bacteria"/>
</dbReference>
<dbReference type="HOGENOM" id="CLU_039478_2_0_4"/>
<dbReference type="OrthoDB" id="9789727at2"/>
<dbReference type="UniPathway" id="UPA00379">
    <property type="reaction ID" value="UER00552"/>
</dbReference>
<dbReference type="Proteomes" id="UP000001424">
    <property type="component" value="Chromosome"/>
</dbReference>
<dbReference type="GO" id="GO:0008783">
    <property type="term" value="F:agmatinase activity"/>
    <property type="evidence" value="ECO:0007669"/>
    <property type="project" value="TreeGrafter"/>
</dbReference>
<dbReference type="GO" id="GO:0050415">
    <property type="term" value="F:formimidoylglutamase activity"/>
    <property type="evidence" value="ECO:0007669"/>
    <property type="project" value="UniProtKB-UniRule"/>
</dbReference>
<dbReference type="GO" id="GO:0030145">
    <property type="term" value="F:manganese ion binding"/>
    <property type="evidence" value="ECO:0007669"/>
    <property type="project" value="UniProtKB-UniRule"/>
</dbReference>
<dbReference type="GO" id="GO:0019556">
    <property type="term" value="P:L-histidine catabolic process to glutamate and formamide"/>
    <property type="evidence" value="ECO:0007669"/>
    <property type="project" value="UniProtKB-UniPathway"/>
</dbReference>
<dbReference type="GO" id="GO:0019557">
    <property type="term" value="P:L-histidine catabolic process to glutamate and formate"/>
    <property type="evidence" value="ECO:0007669"/>
    <property type="project" value="UniProtKB-UniPathway"/>
</dbReference>
<dbReference type="GO" id="GO:0033389">
    <property type="term" value="P:putrescine biosynthetic process from arginine, via agmatine"/>
    <property type="evidence" value="ECO:0007669"/>
    <property type="project" value="TreeGrafter"/>
</dbReference>
<dbReference type="CDD" id="cd09988">
    <property type="entry name" value="Formimidoylglutamase"/>
    <property type="match status" value="1"/>
</dbReference>
<dbReference type="Gene3D" id="3.40.800.10">
    <property type="entry name" value="Ureohydrolase domain"/>
    <property type="match status" value="1"/>
</dbReference>
<dbReference type="HAMAP" id="MF_00737">
    <property type="entry name" value="Formimidoylglutam"/>
    <property type="match status" value="1"/>
</dbReference>
<dbReference type="InterPro" id="IPR005923">
    <property type="entry name" value="HutG"/>
</dbReference>
<dbReference type="InterPro" id="IPR006035">
    <property type="entry name" value="Ureohydrolase"/>
</dbReference>
<dbReference type="InterPro" id="IPR023696">
    <property type="entry name" value="Ureohydrolase_dom_sf"/>
</dbReference>
<dbReference type="InterPro" id="IPR020855">
    <property type="entry name" value="Ureohydrolase_Mn_BS"/>
</dbReference>
<dbReference type="NCBIfam" id="TIGR01227">
    <property type="entry name" value="hutG"/>
    <property type="match status" value="1"/>
</dbReference>
<dbReference type="PANTHER" id="PTHR11358">
    <property type="entry name" value="ARGINASE/AGMATINASE"/>
    <property type="match status" value="1"/>
</dbReference>
<dbReference type="PANTHER" id="PTHR11358:SF35">
    <property type="entry name" value="FORMIMIDOYLGLUTAMASE"/>
    <property type="match status" value="1"/>
</dbReference>
<dbReference type="Pfam" id="PF00491">
    <property type="entry name" value="Arginase"/>
    <property type="match status" value="1"/>
</dbReference>
<dbReference type="PIRSF" id="PIRSF036979">
    <property type="entry name" value="Arginase"/>
    <property type="match status" value="1"/>
</dbReference>
<dbReference type="PRINTS" id="PR00116">
    <property type="entry name" value="ARGINASE"/>
</dbReference>
<dbReference type="SUPFAM" id="SSF52768">
    <property type="entry name" value="Arginase/deacetylase"/>
    <property type="match status" value="1"/>
</dbReference>
<dbReference type="PROSITE" id="PS01053">
    <property type="entry name" value="ARGINASE_1"/>
    <property type="match status" value="1"/>
</dbReference>
<dbReference type="PROSITE" id="PS51409">
    <property type="entry name" value="ARGINASE_2"/>
    <property type="match status" value="1"/>
</dbReference>
<comment type="function">
    <text evidence="1">Catalyzes the conversion of N-formimidoyl-L-glutamate to L-glutamate and formamide.</text>
</comment>
<comment type="catalytic activity">
    <reaction evidence="1">
        <text>N-formimidoyl-L-glutamate + H2O = formamide + L-glutamate</text>
        <dbReference type="Rhea" id="RHEA:22492"/>
        <dbReference type="ChEBI" id="CHEBI:15377"/>
        <dbReference type="ChEBI" id="CHEBI:16397"/>
        <dbReference type="ChEBI" id="CHEBI:29985"/>
        <dbReference type="ChEBI" id="CHEBI:58928"/>
        <dbReference type="EC" id="3.5.3.8"/>
    </reaction>
</comment>
<comment type="cofactor">
    <cofactor evidence="1">
        <name>Mn(2+)</name>
        <dbReference type="ChEBI" id="CHEBI:29035"/>
    </cofactor>
    <text evidence="1">Binds 2 manganese ions per subunit.</text>
</comment>
<comment type="pathway">
    <text evidence="1">Amino-acid degradation; L-histidine degradation into L-glutamate; L-glutamate from N-formimidoyl-L-glutamate (hydrolase route): step 1/1.</text>
</comment>
<comment type="similarity">
    <text evidence="1">Belongs to the arginase family.</text>
</comment>
<keyword id="KW-0369">Histidine metabolism</keyword>
<keyword id="KW-0378">Hydrolase</keyword>
<keyword id="KW-0464">Manganese</keyword>
<keyword id="KW-0479">Metal-binding</keyword>
<keyword id="KW-1185">Reference proteome</keyword>
<name>HUTG_CHRVO</name>
<accession>P60109</accession>
<accession>Q7P191</accession>
<gene>
    <name evidence="1" type="primary">hutG</name>
    <name type="ordered locus">CV_0322</name>
</gene>
<reference key="1">
    <citation type="journal article" date="2003" name="Proc. Natl. Acad. Sci. U.S.A.">
        <title>The complete genome sequence of Chromobacterium violaceum reveals remarkable and exploitable bacterial adaptability.</title>
        <authorList>
            <person name="Vasconcelos A.T.R."/>
            <person name="de Almeida D.F."/>
            <person name="Hungria M."/>
            <person name="Guimaraes C.T."/>
            <person name="Antonio R.V."/>
            <person name="Almeida F.C."/>
            <person name="de Almeida L.G.P."/>
            <person name="de Almeida R."/>
            <person name="Alves-Gomes J.A."/>
            <person name="Andrade E.M."/>
            <person name="Araripe J."/>
            <person name="de Araujo M.F.F."/>
            <person name="Astolfi-Filho S."/>
            <person name="Azevedo V."/>
            <person name="Baptista A.J."/>
            <person name="Bataus L.A.M."/>
            <person name="Batista J.S."/>
            <person name="Belo A."/>
            <person name="van den Berg C."/>
            <person name="Bogo M."/>
            <person name="Bonatto S."/>
            <person name="Bordignon J."/>
            <person name="Brigido M.M."/>
            <person name="Brito C.A."/>
            <person name="Brocchi M."/>
            <person name="Burity H.A."/>
            <person name="Camargo A.A."/>
            <person name="Cardoso D.D.P."/>
            <person name="Carneiro N.P."/>
            <person name="Carraro D.M."/>
            <person name="Carvalho C.M.B."/>
            <person name="Cascardo J.C.M."/>
            <person name="Cavada B.S."/>
            <person name="Chueire L.M.O."/>
            <person name="Creczynski-Pasa T.B."/>
            <person name="Cunha-Junior N.C."/>
            <person name="Fagundes N."/>
            <person name="Falcao C.L."/>
            <person name="Fantinatti F."/>
            <person name="Farias I.P."/>
            <person name="Felipe M.S.S."/>
            <person name="Ferrari L.P."/>
            <person name="Ferro J.A."/>
            <person name="Ferro M.I.T."/>
            <person name="Franco G.R."/>
            <person name="Freitas N.S.A."/>
            <person name="Furlan L.R."/>
            <person name="Gazzinelli R.T."/>
            <person name="Gomes E.A."/>
            <person name="Goncalves P.R."/>
            <person name="Grangeiro T.B."/>
            <person name="Grattapaglia D."/>
            <person name="Grisard E.C."/>
            <person name="Hanna E.S."/>
            <person name="Jardim S.N."/>
            <person name="Laurino J."/>
            <person name="Leoi L.C.T."/>
            <person name="Lima L.F.A."/>
            <person name="Loureiro M.F."/>
            <person name="Lyra M.C.C.P."/>
            <person name="Madeira H.M.F."/>
            <person name="Manfio G.P."/>
            <person name="Maranhao A.Q."/>
            <person name="Martins W.S."/>
            <person name="di Mauro S.M.Z."/>
            <person name="de Medeiros S.R.B."/>
            <person name="Meissner R.V."/>
            <person name="Moreira M.A.M."/>
            <person name="Nascimento F.F."/>
            <person name="Nicolas M.F."/>
            <person name="Oliveira J.G."/>
            <person name="Oliveira S.C."/>
            <person name="Paixao R.F.C."/>
            <person name="Parente J.A."/>
            <person name="Pedrosa F.O."/>
            <person name="Pena S.D.J."/>
            <person name="Pereira J.O."/>
            <person name="Pereira M."/>
            <person name="Pinto L.S.R.C."/>
            <person name="Pinto L.S."/>
            <person name="Porto J.I.R."/>
            <person name="Potrich D.P."/>
            <person name="Ramalho-Neto C.E."/>
            <person name="Reis A.M.M."/>
            <person name="Rigo L.U."/>
            <person name="Rondinelli E."/>
            <person name="Santos E.B.P."/>
            <person name="Santos F.R."/>
            <person name="Schneider M.P.C."/>
            <person name="Seuanez H.N."/>
            <person name="Silva A.M.R."/>
            <person name="da Silva A.L.C."/>
            <person name="Silva D.W."/>
            <person name="Silva R."/>
            <person name="Simoes I.C."/>
            <person name="Simon D."/>
            <person name="Soares C.M.A."/>
            <person name="Soares R.B.A."/>
            <person name="Souza E.M."/>
            <person name="Souza K.R.L."/>
            <person name="Souza R.C."/>
            <person name="Steffens M.B.R."/>
            <person name="Steindel M."/>
            <person name="Teixeira S.R."/>
            <person name="Urmenyi T."/>
            <person name="Vettore A."/>
            <person name="Wassem R."/>
            <person name="Zaha A."/>
            <person name="Simpson A.J.G."/>
        </authorList>
    </citation>
    <scope>NUCLEOTIDE SEQUENCE [LARGE SCALE GENOMIC DNA]</scope>
    <source>
        <strain>ATCC 12472 / DSM 30191 / JCM 1249 / CCUG 213 / NBRC 12614 / NCIMB 9131 / NCTC 9757 / MK</strain>
    </source>
</reference>